<comment type="function">
    <text evidence="1">Catalyzes the NADPH-dependent reduction of L-glutamate 5-phosphate into L-glutamate 5-semialdehyde and phosphate. The product spontaneously undergoes cyclization to form 1-pyrroline-5-carboxylate.</text>
</comment>
<comment type="catalytic activity">
    <reaction evidence="1">
        <text>L-glutamate 5-semialdehyde + phosphate + NADP(+) = L-glutamyl 5-phosphate + NADPH + H(+)</text>
        <dbReference type="Rhea" id="RHEA:19541"/>
        <dbReference type="ChEBI" id="CHEBI:15378"/>
        <dbReference type="ChEBI" id="CHEBI:43474"/>
        <dbReference type="ChEBI" id="CHEBI:57783"/>
        <dbReference type="ChEBI" id="CHEBI:58066"/>
        <dbReference type="ChEBI" id="CHEBI:58274"/>
        <dbReference type="ChEBI" id="CHEBI:58349"/>
        <dbReference type="EC" id="1.2.1.41"/>
    </reaction>
</comment>
<comment type="pathway">
    <text evidence="1">Amino-acid biosynthesis; L-proline biosynthesis; L-glutamate 5-semialdehyde from L-glutamate: step 2/2.</text>
</comment>
<comment type="subcellular location">
    <subcellularLocation>
        <location evidence="1">Cytoplasm</location>
    </subcellularLocation>
</comment>
<comment type="similarity">
    <text evidence="1">Belongs to the gamma-glutamyl phosphate reductase family.</text>
</comment>
<proteinExistence type="inferred from homology"/>
<keyword id="KW-0028">Amino-acid biosynthesis</keyword>
<keyword id="KW-0963">Cytoplasm</keyword>
<keyword id="KW-0521">NADP</keyword>
<keyword id="KW-0560">Oxidoreductase</keyword>
<keyword id="KW-0641">Proline biosynthesis</keyword>
<keyword id="KW-1185">Reference proteome</keyword>
<protein>
    <recommendedName>
        <fullName evidence="1">Gamma-glutamyl phosphate reductase</fullName>
        <shortName evidence="1">GPR</shortName>
        <ecNumber evidence="1">1.2.1.41</ecNumber>
    </recommendedName>
    <alternativeName>
        <fullName evidence="1">Glutamate-5-semialdehyde dehydrogenase</fullName>
    </alternativeName>
    <alternativeName>
        <fullName evidence="1">Glutamyl-gamma-semialdehyde dehydrogenase</fullName>
        <shortName evidence="1">GSA dehydrogenase</shortName>
    </alternativeName>
</protein>
<feature type="chain" id="PRO_0000252561" description="Gamma-glutamyl phosphate reductase">
    <location>
        <begin position="1"/>
        <end position="409"/>
    </location>
</feature>
<evidence type="ECO:0000255" key="1">
    <source>
        <dbReference type="HAMAP-Rule" id="MF_00412"/>
    </source>
</evidence>
<dbReference type="EC" id="1.2.1.41" evidence="1"/>
<dbReference type="EMBL" id="CP000360">
    <property type="protein sequence ID" value="ABF40270.1"/>
    <property type="molecule type" value="Genomic_DNA"/>
</dbReference>
<dbReference type="RefSeq" id="WP_011522072.1">
    <property type="nucleotide sequence ID" value="NC_008009.1"/>
</dbReference>
<dbReference type="SMR" id="Q1IS80"/>
<dbReference type="STRING" id="204669.Acid345_1268"/>
<dbReference type="EnsemblBacteria" id="ABF40270">
    <property type="protein sequence ID" value="ABF40270"/>
    <property type="gene ID" value="Acid345_1268"/>
</dbReference>
<dbReference type="KEGG" id="aba:Acid345_1268"/>
<dbReference type="eggNOG" id="COG0014">
    <property type="taxonomic scope" value="Bacteria"/>
</dbReference>
<dbReference type="HOGENOM" id="CLU_030231_0_0_0"/>
<dbReference type="OrthoDB" id="9809970at2"/>
<dbReference type="UniPathway" id="UPA00098">
    <property type="reaction ID" value="UER00360"/>
</dbReference>
<dbReference type="Proteomes" id="UP000002432">
    <property type="component" value="Chromosome"/>
</dbReference>
<dbReference type="GO" id="GO:0005737">
    <property type="term" value="C:cytoplasm"/>
    <property type="evidence" value="ECO:0007669"/>
    <property type="project" value="UniProtKB-SubCell"/>
</dbReference>
<dbReference type="GO" id="GO:0004350">
    <property type="term" value="F:glutamate-5-semialdehyde dehydrogenase activity"/>
    <property type="evidence" value="ECO:0007669"/>
    <property type="project" value="UniProtKB-UniRule"/>
</dbReference>
<dbReference type="GO" id="GO:0050661">
    <property type="term" value="F:NADP binding"/>
    <property type="evidence" value="ECO:0007669"/>
    <property type="project" value="InterPro"/>
</dbReference>
<dbReference type="GO" id="GO:0055129">
    <property type="term" value="P:L-proline biosynthetic process"/>
    <property type="evidence" value="ECO:0007669"/>
    <property type="project" value="UniProtKB-UniRule"/>
</dbReference>
<dbReference type="CDD" id="cd07079">
    <property type="entry name" value="ALDH_F18-19_ProA-GPR"/>
    <property type="match status" value="1"/>
</dbReference>
<dbReference type="FunFam" id="3.40.309.10:FF:000006">
    <property type="entry name" value="Gamma-glutamyl phosphate reductase"/>
    <property type="match status" value="1"/>
</dbReference>
<dbReference type="Gene3D" id="3.40.605.10">
    <property type="entry name" value="Aldehyde Dehydrogenase, Chain A, domain 1"/>
    <property type="match status" value="1"/>
</dbReference>
<dbReference type="Gene3D" id="3.40.309.10">
    <property type="entry name" value="Aldehyde Dehydrogenase, Chain A, domain 2"/>
    <property type="match status" value="1"/>
</dbReference>
<dbReference type="HAMAP" id="MF_00412">
    <property type="entry name" value="ProA"/>
    <property type="match status" value="1"/>
</dbReference>
<dbReference type="InterPro" id="IPR016161">
    <property type="entry name" value="Ald_DH/histidinol_DH"/>
</dbReference>
<dbReference type="InterPro" id="IPR016163">
    <property type="entry name" value="Ald_DH_C"/>
</dbReference>
<dbReference type="InterPro" id="IPR016162">
    <property type="entry name" value="Ald_DH_N"/>
</dbReference>
<dbReference type="InterPro" id="IPR015590">
    <property type="entry name" value="Aldehyde_DH_dom"/>
</dbReference>
<dbReference type="InterPro" id="IPR020593">
    <property type="entry name" value="G-glutamylP_reductase_CS"/>
</dbReference>
<dbReference type="InterPro" id="IPR012134">
    <property type="entry name" value="Glu-5-SA_DH"/>
</dbReference>
<dbReference type="InterPro" id="IPR000965">
    <property type="entry name" value="GPR_dom"/>
</dbReference>
<dbReference type="NCBIfam" id="NF001221">
    <property type="entry name" value="PRK00197.1"/>
    <property type="match status" value="1"/>
</dbReference>
<dbReference type="NCBIfam" id="TIGR00407">
    <property type="entry name" value="proA"/>
    <property type="match status" value="1"/>
</dbReference>
<dbReference type="PANTHER" id="PTHR11063:SF8">
    <property type="entry name" value="DELTA-1-PYRROLINE-5-CARBOXYLATE SYNTHASE"/>
    <property type="match status" value="1"/>
</dbReference>
<dbReference type="PANTHER" id="PTHR11063">
    <property type="entry name" value="GLUTAMATE SEMIALDEHYDE DEHYDROGENASE"/>
    <property type="match status" value="1"/>
</dbReference>
<dbReference type="Pfam" id="PF00171">
    <property type="entry name" value="Aldedh"/>
    <property type="match status" value="1"/>
</dbReference>
<dbReference type="PIRSF" id="PIRSF000151">
    <property type="entry name" value="GPR"/>
    <property type="match status" value="1"/>
</dbReference>
<dbReference type="SUPFAM" id="SSF53720">
    <property type="entry name" value="ALDH-like"/>
    <property type="match status" value="1"/>
</dbReference>
<dbReference type="PROSITE" id="PS01223">
    <property type="entry name" value="PROA"/>
    <property type="match status" value="1"/>
</dbReference>
<gene>
    <name evidence="1" type="primary">proA</name>
    <name type="ordered locus">Acid345_1268</name>
</gene>
<reference key="1">
    <citation type="journal article" date="2009" name="Appl. Environ. Microbiol.">
        <title>Three genomes from the phylum Acidobacteria provide insight into the lifestyles of these microorganisms in soils.</title>
        <authorList>
            <person name="Ward N.L."/>
            <person name="Challacombe J.F."/>
            <person name="Janssen P.H."/>
            <person name="Henrissat B."/>
            <person name="Coutinho P.M."/>
            <person name="Wu M."/>
            <person name="Xie G."/>
            <person name="Haft D.H."/>
            <person name="Sait M."/>
            <person name="Badger J."/>
            <person name="Barabote R.D."/>
            <person name="Bradley B."/>
            <person name="Brettin T.S."/>
            <person name="Brinkac L.M."/>
            <person name="Bruce D."/>
            <person name="Creasy T."/>
            <person name="Daugherty S.C."/>
            <person name="Davidsen T.M."/>
            <person name="DeBoy R.T."/>
            <person name="Detter J.C."/>
            <person name="Dodson R.J."/>
            <person name="Durkin A.S."/>
            <person name="Ganapathy A."/>
            <person name="Gwinn-Giglio M."/>
            <person name="Han C.S."/>
            <person name="Khouri H."/>
            <person name="Kiss H."/>
            <person name="Kothari S.P."/>
            <person name="Madupu R."/>
            <person name="Nelson K.E."/>
            <person name="Nelson W.C."/>
            <person name="Paulsen I."/>
            <person name="Penn K."/>
            <person name="Ren Q."/>
            <person name="Rosovitz M.J."/>
            <person name="Selengut J.D."/>
            <person name="Shrivastava S."/>
            <person name="Sullivan S.A."/>
            <person name="Tapia R."/>
            <person name="Thompson L.S."/>
            <person name="Watkins K.L."/>
            <person name="Yang Q."/>
            <person name="Yu C."/>
            <person name="Zafar N."/>
            <person name="Zhou L."/>
            <person name="Kuske C.R."/>
        </authorList>
    </citation>
    <scope>NUCLEOTIDE SEQUENCE [LARGE SCALE GENOMIC DNA]</scope>
    <source>
        <strain>Ellin345</strain>
    </source>
</reference>
<organism>
    <name type="scientific">Koribacter versatilis (strain Ellin345)</name>
    <dbReference type="NCBI Taxonomy" id="204669"/>
    <lineage>
        <taxon>Bacteria</taxon>
        <taxon>Pseudomonadati</taxon>
        <taxon>Acidobacteriota</taxon>
        <taxon>Terriglobia</taxon>
        <taxon>Terriglobales</taxon>
        <taxon>Candidatus Korobacteraceae</taxon>
        <taxon>Candidatus Korobacter</taxon>
    </lineage>
</organism>
<accession>Q1IS80</accession>
<sequence length="409" mass="43990">MTTREKLEAARRAAPVVAELSTESKNALLLALARTIDERTEEILAANRADLEASGLDGSLRDRLLLTPERIATMAEGLREVAALADPVGETLAEWERPNGLRIRKVRVPLGVVAIIYEARPNVTIDVIGLALKSGNAVVLRGGKEAVRSNECLVKIAGATPGMPDGAIQLLDASNRESVQQLMKARGLVDVIVPRGGAGLIQFVVENSTVPVIETGAGNCHIFVDESANLDMADRIVINAKTQRPSVCNAAEKLLVHRAIAKEYVPRIVKLLLDHGVEVRGDAETLALAQGMQVAEATSADWDEEYLRLCMAVKVVADVDEAIAHINQHSTKHSESIITANDAHARRFLRAADSAAVYWNASTRFTDGAEFGFGAEMGISTQKLHCRGPFALAELTSSKYEVIGSGQVR</sequence>
<name>PROA_KORVE</name>